<organism>
    <name type="scientific">Salmonella typhimurium (strain LT2 / SGSC1412 / ATCC 700720)</name>
    <dbReference type="NCBI Taxonomy" id="99287"/>
    <lineage>
        <taxon>Bacteria</taxon>
        <taxon>Pseudomonadati</taxon>
        <taxon>Pseudomonadota</taxon>
        <taxon>Gammaproteobacteria</taxon>
        <taxon>Enterobacterales</taxon>
        <taxon>Enterobacteriaceae</taxon>
        <taxon>Salmonella</taxon>
    </lineage>
</organism>
<accession>Q8ZK57</accession>
<feature type="chain" id="PRO_0000352595" description="Inositol 2-dehydrogenase">
    <location>
        <begin position="1"/>
        <end position="336"/>
    </location>
</feature>
<feature type="strand" evidence="2">
    <location>
        <begin position="3"/>
        <end position="8"/>
    </location>
</feature>
<feature type="helix" evidence="2">
    <location>
        <begin position="12"/>
        <end position="23"/>
    </location>
</feature>
<feature type="strand" evidence="2">
    <location>
        <begin position="28"/>
        <end position="34"/>
    </location>
</feature>
<feature type="helix" evidence="2">
    <location>
        <begin position="40"/>
        <end position="48"/>
    </location>
</feature>
<feature type="strand" evidence="2">
    <location>
        <begin position="53"/>
        <end position="57"/>
    </location>
</feature>
<feature type="helix" evidence="2">
    <location>
        <begin position="58"/>
        <end position="63"/>
    </location>
</feature>
<feature type="strand" evidence="2">
    <location>
        <begin position="69"/>
        <end position="72"/>
    </location>
</feature>
<feature type="helix" evidence="2">
    <location>
        <begin position="76"/>
        <end position="78"/>
    </location>
</feature>
<feature type="helix" evidence="2">
    <location>
        <begin position="79"/>
        <end position="88"/>
    </location>
</feature>
<feature type="strand" evidence="2">
    <location>
        <begin position="92"/>
        <end position="99"/>
    </location>
</feature>
<feature type="helix" evidence="2">
    <location>
        <begin position="103"/>
        <end position="116"/>
    </location>
</feature>
<feature type="strand" evidence="2">
    <location>
        <begin position="121"/>
        <end position="124"/>
    </location>
</feature>
<feature type="helix" evidence="2">
    <location>
        <begin position="126"/>
        <end position="129"/>
    </location>
</feature>
<feature type="helix" evidence="2">
    <location>
        <begin position="131"/>
        <end position="142"/>
    </location>
</feature>
<feature type="turn" evidence="2">
    <location>
        <begin position="143"/>
        <end position="145"/>
    </location>
</feature>
<feature type="strand" evidence="2">
    <location>
        <begin position="147"/>
        <end position="156"/>
    </location>
</feature>
<feature type="helix" evidence="2">
    <location>
        <begin position="168"/>
        <end position="171"/>
    </location>
</feature>
<feature type="helix" evidence="2">
    <location>
        <begin position="174"/>
        <end position="185"/>
    </location>
</feature>
<feature type="strand" evidence="2">
    <location>
        <begin position="189"/>
        <end position="195"/>
    </location>
</feature>
<feature type="strand" evidence="2">
    <location>
        <begin position="209"/>
        <end position="216"/>
    </location>
</feature>
<feature type="strand" evidence="2">
    <location>
        <begin position="221"/>
        <end position="227"/>
    </location>
</feature>
<feature type="strand" evidence="2">
    <location>
        <begin position="235"/>
        <end position="248"/>
    </location>
</feature>
<feature type="strand" evidence="2">
    <location>
        <begin position="256"/>
        <end position="259"/>
    </location>
</feature>
<feature type="strand" evidence="2">
    <location>
        <begin position="262"/>
        <end position="266"/>
    </location>
</feature>
<feature type="helix" evidence="2">
    <location>
        <begin position="271"/>
        <end position="273"/>
    </location>
</feature>
<feature type="helix" evidence="2">
    <location>
        <begin position="276"/>
        <end position="292"/>
    </location>
</feature>
<feature type="helix" evidence="2">
    <location>
        <begin position="301"/>
        <end position="320"/>
    </location>
</feature>
<feature type="helix" evidence="2">
    <location>
        <begin position="333"/>
        <end position="335"/>
    </location>
</feature>
<keyword id="KW-0002">3D-structure</keyword>
<keyword id="KW-0520">NAD</keyword>
<keyword id="KW-0560">Oxidoreductase</keyword>
<keyword id="KW-1185">Reference proteome</keyword>
<comment type="function">
    <text evidence="1">Involved in the oxidation of myo-inositol (MI) to 2-keto-myo-inositol (2KMI or 2-inosose).</text>
</comment>
<comment type="catalytic activity">
    <reaction evidence="1">
        <text>myo-inositol + NAD(+) = scyllo-inosose + NADH + H(+)</text>
        <dbReference type="Rhea" id="RHEA:16949"/>
        <dbReference type="ChEBI" id="CHEBI:15378"/>
        <dbReference type="ChEBI" id="CHEBI:17268"/>
        <dbReference type="ChEBI" id="CHEBI:17811"/>
        <dbReference type="ChEBI" id="CHEBI:57540"/>
        <dbReference type="ChEBI" id="CHEBI:57945"/>
        <dbReference type="EC" id="1.1.1.18"/>
    </reaction>
</comment>
<comment type="subunit">
    <text evidence="1">Homotetramer.</text>
</comment>
<comment type="similarity">
    <text evidence="1">Belongs to the Gfo/Idh/MocA family.</text>
</comment>
<protein>
    <recommendedName>
        <fullName evidence="1">Inositol 2-dehydrogenase</fullName>
        <ecNumber evidence="1">1.1.1.18</ecNumber>
    </recommendedName>
    <alternativeName>
        <fullName evidence="1">Myo-inositol 2-dehydrogenase</fullName>
        <shortName evidence="1">MI 2-dehydrogenase</shortName>
    </alternativeName>
</protein>
<dbReference type="EC" id="1.1.1.18" evidence="1"/>
<dbReference type="EMBL" id="AE006468">
    <property type="protein sequence ID" value="AAL23245.1"/>
    <property type="molecule type" value="Genomic_DNA"/>
</dbReference>
<dbReference type="RefSeq" id="NP_463286.1">
    <property type="nucleotide sequence ID" value="NC_003197.2"/>
</dbReference>
<dbReference type="PDB" id="3EC7">
    <property type="method" value="X-ray"/>
    <property type="resolution" value="2.15 A"/>
    <property type="chains" value="A/B/C/D/E/F/G/H=1-336"/>
</dbReference>
<dbReference type="PDBsum" id="3EC7"/>
<dbReference type="SMR" id="Q8ZK57"/>
<dbReference type="STRING" id="99287.STM4425"/>
<dbReference type="PaxDb" id="99287-STM4425"/>
<dbReference type="DNASU" id="1255951"/>
<dbReference type="GeneID" id="1255951"/>
<dbReference type="KEGG" id="stm:STM4425"/>
<dbReference type="PATRIC" id="fig|99287.12.peg.4653"/>
<dbReference type="HOGENOM" id="CLU_023194_0_1_6"/>
<dbReference type="OMA" id="VNCKYGY"/>
<dbReference type="PhylomeDB" id="Q8ZK57"/>
<dbReference type="BioCyc" id="SENT99287:STM4425-MONOMER"/>
<dbReference type="EvolutionaryTrace" id="Q8ZK57"/>
<dbReference type="Proteomes" id="UP000001014">
    <property type="component" value="Chromosome"/>
</dbReference>
<dbReference type="GO" id="GO:0050112">
    <property type="term" value="F:inositol 2-dehydrogenase (NAD+) activity"/>
    <property type="evidence" value="ECO:0007669"/>
    <property type="project" value="UniProtKB-UniRule"/>
</dbReference>
<dbReference type="GO" id="GO:0000166">
    <property type="term" value="F:nucleotide binding"/>
    <property type="evidence" value="ECO:0007669"/>
    <property type="project" value="InterPro"/>
</dbReference>
<dbReference type="GO" id="GO:0019310">
    <property type="term" value="P:inositol catabolic process"/>
    <property type="evidence" value="ECO:0007669"/>
    <property type="project" value="UniProtKB-UniRule"/>
</dbReference>
<dbReference type="Gene3D" id="3.30.360.10">
    <property type="entry name" value="Dihydrodipicolinate Reductase, domain 2"/>
    <property type="match status" value="1"/>
</dbReference>
<dbReference type="Gene3D" id="3.40.50.720">
    <property type="entry name" value="NAD(P)-binding Rossmann-like Domain"/>
    <property type="match status" value="1"/>
</dbReference>
<dbReference type="HAMAP" id="MF_01671">
    <property type="entry name" value="IolG"/>
    <property type="match status" value="1"/>
</dbReference>
<dbReference type="InterPro" id="IPR050424">
    <property type="entry name" value="Gfo-Idh-MocA_inositol_DH"/>
</dbReference>
<dbReference type="InterPro" id="IPR004104">
    <property type="entry name" value="Gfo/Idh/MocA-like_OxRdtase_C"/>
</dbReference>
<dbReference type="InterPro" id="IPR000683">
    <property type="entry name" value="Gfo/Idh/MocA-like_OxRdtase_N"/>
</dbReference>
<dbReference type="InterPro" id="IPR023794">
    <property type="entry name" value="MI/DCI_dehydrogenase"/>
</dbReference>
<dbReference type="InterPro" id="IPR036291">
    <property type="entry name" value="NAD(P)-bd_dom_sf"/>
</dbReference>
<dbReference type="PANTHER" id="PTHR43593">
    <property type="match status" value="1"/>
</dbReference>
<dbReference type="PANTHER" id="PTHR43593:SF1">
    <property type="entry name" value="INOSITOL 2-DEHYDROGENASE"/>
    <property type="match status" value="1"/>
</dbReference>
<dbReference type="Pfam" id="PF01408">
    <property type="entry name" value="GFO_IDH_MocA"/>
    <property type="match status" value="1"/>
</dbReference>
<dbReference type="Pfam" id="PF02894">
    <property type="entry name" value="GFO_IDH_MocA_C"/>
    <property type="match status" value="1"/>
</dbReference>
<dbReference type="SUPFAM" id="SSF55347">
    <property type="entry name" value="Glyceraldehyde-3-phosphate dehydrogenase-like, C-terminal domain"/>
    <property type="match status" value="1"/>
</dbReference>
<dbReference type="SUPFAM" id="SSF51735">
    <property type="entry name" value="NAD(P)-binding Rossmann-fold domains"/>
    <property type="match status" value="1"/>
</dbReference>
<proteinExistence type="evidence at protein level"/>
<gene>
    <name evidence="1" type="primary">iolG</name>
    <name type="ordered locus">STM4425</name>
</gene>
<evidence type="ECO:0000255" key="1">
    <source>
        <dbReference type="HAMAP-Rule" id="MF_01671"/>
    </source>
</evidence>
<evidence type="ECO:0007829" key="2">
    <source>
        <dbReference type="PDB" id="3EC7"/>
    </source>
</evidence>
<name>IOLG_SALTY</name>
<reference key="1">
    <citation type="journal article" date="2001" name="Nature">
        <title>Complete genome sequence of Salmonella enterica serovar Typhimurium LT2.</title>
        <authorList>
            <person name="McClelland M."/>
            <person name="Sanderson K.E."/>
            <person name="Spieth J."/>
            <person name="Clifton S.W."/>
            <person name="Latreille P."/>
            <person name="Courtney L."/>
            <person name="Porwollik S."/>
            <person name="Ali J."/>
            <person name="Dante M."/>
            <person name="Du F."/>
            <person name="Hou S."/>
            <person name="Layman D."/>
            <person name="Leonard S."/>
            <person name="Nguyen C."/>
            <person name="Scott K."/>
            <person name="Holmes A."/>
            <person name="Grewal N."/>
            <person name="Mulvaney E."/>
            <person name="Ryan E."/>
            <person name="Sun H."/>
            <person name="Florea L."/>
            <person name="Miller W."/>
            <person name="Stoneking T."/>
            <person name="Nhan M."/>
            <person name="Waterston R."/>
            <person name="Wilson R.K."/>
        </authorList>
    </citation>
    <scope>NUCLEOTIDE SEQUENCE [LARGE SCALE GENOMIC DNA]</scope>
    <source>
        <strain>LT2 / SGSC1412 / ATCC 700720</strain>
    </source>
</reference>
<sequence>MTLKAGIVGIGMIGSDHLRRLANTVSGVEVVAVCDIVAGRAQAALDKYAIEAKDYNDYHDLINDKDVEVVIITASNEAHADVAVAALNANKYVFCEKPLAVTAADCQRVIEAEQKNGKRMVQIGFMRRYDKGYVQLKNIIDSGEIGQPLMVHGRHYNASTVPEYKTPQAIYETLIHEIDVMHWLLNEDYKTVKVYFPRQSSLVTTLRDPQLVVMETTSGINIVVEVFVNCQYGYDIHCDVTGEKGMAELPTVASAAVRKAAKYSTDILVDWKQRFIDAYDIEFQDFFDRLNAGLPPAGPTSWDGYLAAVTADACVKSQETGNTEIVELPSKPDFYK</sequence>